<sequence length="189" mass="21083">MRSKTITFPVLKLTGQSQALTNDMHKNADHTVPGLTVATGHLIAEALQMRLQGLNELALILKHAHWNVVGPQFIAVHEMLDSQVDEVRDFIDEIAERMATLGVAPNGLSGNLVETRQSPEYPLGRATAQDHLKLIDLYYSHNIEAHRVVLEHNGHLDPISEDLLVAQTRSLEKLQWFIRAHLDNGNGNI</sequence>
<name>FTPA_HAEDU</name>
<protein>
    <recommendedName>
        <fullName>Fine tangled pili major subunit</fullName>
    </recommendedName>
    <alternativeName>
        <fullName>24 kDa surface protein</fullName>
    </alternativeName>
</protein>
<accession>Q47953</accession>
<keyword id="KW-0903">Direct protein sequencing</keyword>
<keyword id="KW-0281">Fimbrium</keyword>
<keyword id="KW-1185">Reference proteome</keyword>
<gene>
    <name type="primary">ftpA</name>
    <name type="ordered locus">HD_0068</name>
</gene>
<comment type="function">
    <text>May contribute to bacterial adherence, or be involved in the protection of the bacteria, or both.</text>
</comment>
<comment type="subunit">
    <text evidence="1">Hexamer.</text>
</comment>
<comment type="subcellular location">
    <subcellularLocation>
        <location>Fimbrium</location>
    </subcellularLocation>
</comment>
<comment type="similarity">
    <text evidence="1">Belongs to the Dps family.</text>
</comment>
<comment type="sequence caution" evidence="1">
    <conflict type="erroneous initiation">
        <sequence resource="EMBL-CDS" id="AAP95079"/>
    </conflict>
</comment>
<proteinExistence type="evidence at protein level"/>
<evidence type="ECO:0000305" key="1"/>
<feature type="chain" id="PRO_0000201659" description="Fine tangled pili major subunit">
    <location>
        <begin position="1"/>
        <end position="189"/>
    </location>
</feature>
<feature type="sequence conflict" description="In Ref. 1; AA sequence." evidence="1" ref="1">
    <original>Q</original>
    <variation>E</variation>
    <location>
        <position position="16"/>
    </location>
</feature>
<feature type="sequence conflict" description="In Ref. 3; AA sequence." evidence="1" ref="3">
    <original>S</original>
    <variation>Q</variation>
    <location>
        <position position="17"/>
    </location>
</feature>
<organism>
    <name type="scientific">Haemophilus ducreyi (strain 35000HP / ATCC 700724)</name>
    <dbReference type="NCBI Taxonomy" id="233412"/>
    <lineage>
        <taxon>Bacteria</taxon>
        <taxon>Pseudomonadati</taxon>
        <taxon>Pseudomonadota</taxon>
        <taxon>Gammaproteobacteria</taxon>
        <taxon>Pasteurellales</taxon>
        <taxon>Pasteurellaceae</taxon>
        <taxon>Haemophilus</taxon>
    </lineage>
</organism>
<dbReference type="EMBL" id="U18769">
    <property type="protein sequence ID" value="AAC43593.1"/>
    <property type="molecule type" value="Genomic_DNA"/>
</dbReference>
<dbReference type="EMBL" id="AE017143">
    <property type="protein sequence ID" value="AAP95079.1"/>
    <property type="status" value="ALT_INIT"/>
    <property type="molecule type" value="Genomic_DNA"/>
</dbReference>
<dbReference type="RefSeq" id="WP_041603322.1">
    <property type="nucleotide sequence ID" value="NC_002940.2"/>
</dbReference>
<dbReference type="SMR" id="Q47953"/>
<dbReference type="STRING" id="233412.HD_0068"/>
<dbReference type="KEGG" id="hdu:HD_0068"/>
<dbReference type="eggNOG" id="COG0783">
    <property type="taxonomic scope" value="Bacteria"/>
</dbReference>
<dbReference type="HOGENOM" id="CLU_098183_1_0_6"/>
<dbReference type="OrthoDB" id="9797687at2"/>
<dbReference type="Proteomes" id="UP000001022">
    <property type="component" value="Chromosome"/>
</dbReference>
<dbReference type="GO" id="GO:0009289">
    <property type="term" value="C:pilus"/>
    <property type="evidence" value="ECO:0007669"/>
    <property type="project" value="UniProtKB-SubCell"/>
</dbReference>
<dbReference type="GO" id="GO:0008199">
    <property type="term" value="F:ferric iron binding"/>
    <property type="evidence" value="ECO:0007669"/>
    <property type="project" value="InterPro"/>
</dbReference>
<dbReference type="GO" id="GO:0016722">
    <property type="term" value="F:oxidoreductase activity, acting on metal ions"/>
    <property type="evidence" value="ECO:0007669"/>
    <property type="project" value="InterPro"/>
</dbReference>
<dbReference type="CDD" id="cd01043">
    <property type="entry name" value="DPS"/>
    <property type="match status" value="1"/>
</dbReference>
<dbReference type="Gene3D" id="1.20.1260.10">
    <property type="match status" value="1"/>
</dbReference>
<dbReference type="InterPro" id="IPR002177">
    <property type="entry name" value="DPS_DNA-bd"/>
</dbReference>
<dbReference type="InterPro" id="IPR023188">
    <property type="entry name" value="DPS_DNA-bd_CS"/>
</dbReference>
<dbReference type="InterPro" id="IPR012347">
    <property type="entry name" value="Ferritin-like"/>
</dbReference>
<dbReference type="InterPro" id="IPR009078">
    <property type="entry name" value="Ferritin-like_SF"/>
</dbReference>
<dbReference type="InterPro" id="IPR008331">
    <property type="entry name" value="Ferritin_DPS_dom"/>
</dbReference>
<dbReference type="PANTHER" id="PTHR42932:SF3">
    <property type="entry name" value="DNA PROTECTION DURING STARVATION PROTEIN"/>
    <property type="match status" value="1"/>
</dbReference>
<dbReference type="PANTHER" id="PTHR42932">
    <property type="entry name" value="GENERAL STRESS PROTEIN 20U"/>
    <property type="match status" value="1"/>
</dbReference>
<dbReference type="Pfam" id="PF00210">
    <property type="entry name" value="Ferritin"/>
    <property type="match status" value="1"/>
</dbReference>
<dbReference type="PIRSF" id="PIRSF005900">
    <property type="entry name" value="Dps"/>
    <property type="match status" value="1"/>
</dbReference>
<dbReference type="PRINTS" id="PR01346">
    <property type="entry name" value="HELNAPAPROT"/>
</dbReference>
<dbReference type="SUPFAM" id="SSF47240">
    <property type="entry name" value="Ferritin-like"/>
    <property type="match status" value="1"/>
</dbReference>
<dbReference type="PROSITE" id="PS00818">
    <property type="entry name" value="DPS_1"/>
    <property type="match status" value="1"/>
</dbReference>
<dbReference type="PROSITE" id="PS00819">
    <property type="entry name" value="DPS_2"/>
    <property type="match status" value="1"/>
</dbReference>
<reference key="1">
    <citation type="journal article" date="1996" name="J. Bacteriol.">
        <title>Fine tangled pili expressed by Haemophilus ducreyi are a novel class of pili.</title>
        <authorList>
            <person name="Brentjens R.J."/>
            <person name="Ketterer M."/>
            <person name="Apicella M.A."/>
            <person name="Spinola S.M."/>
        </authorList>
    </citation>
    <scope>NUCLEOTIDE SEQUENCE [GENOMIC DNA]</scope>
    <scope>PROTEIN SEQUENCE OF 1-16</scope>
    <source>
        <strain>85-023233</strain>
    </source>
</reference>
<reference key="2">
    <citation type="submission" date="2003-06" db="EMBL/GenBank/DDBJ databases">
        <title>The complete genome sequence of Haemophilus ducreyi.</title>
        <authorList>
            <person name="Munson R.S. Jr."/>
            <person name="Ray W.C."/>
            <person name="Mahairas G."/>
            <person name="Sabo P."/>
            <person name="Mungur R."/>
            <person name="Johnson L."/>
            <person name="Nguyen D."/>
            <person name="Wang J."/>
            <person name="Forst C."/>
            <person name="Hood L."/>
        </authorList>
    </citation>
    <scope>NUCLEOTIDE SEQUENCE [LARGE SCALE GENOMIC DNA]</scope>
    <source>
        <strain>35000HP / ATCC 700724</strain>
    </source>
</reference>
<reference key="3">
    <citation type="journal article" date="1995" name="J. Med. Microbiol.">
        <title>Localisation and immunological properties of a 24-kDa surface protein of Haemophilus ducreyi.</title>
        <authorList>
            <person name="Frisk A."/>
            <person name="Roggen E.L."/>
            <person name="Lagergaard T."/>
        </authorList>
    </citation>
    <scope>PROTEIN SEQUENCE OF 1-25</scope>
</reference>